<accession>A0A0H3CC47</accession>
<gene>
    <name evidence="3" type="primary">nrsF</name>
    <name type="ordered locus">CCNA_03273</name>
</gene>
<comment type="function">
    <text evidence="2 5">An anti-sigma factor for extracytoplasmic function (ECF) sigma factor sigma-F (SigF), which responds to chromate and cadmium. Overexpression leads to loss of response to dichromate. ECF sigma factors are held in an inactive form by a cognate anti-sigma factor (Probable).</text>
</comment>
<comment type="subcellular location">
    <subcellularLocation>
        <location evidence="5">Cell inner membrane</location>
        <topology evidence="1">Multi-pass membrane protein</topology>
    </subcellularLocation>
</comment>
<comment type="induction">
    <text evidence="2">Slightly induced by potassium dichromate (K(2)Cr(2)O(7)) (PubMed:22985357). Induction by Cr is partially dependent on sigF (PubMed:22985357). Probably part of the sigF-nrsF operon (PubMed:22985357).</text>
</comment>
<comment type="disruption phenotype">
    <text evidence="2">Cannot be deleted in the presence of an intact sigF gene, a double sigF-nrsF mutant is viable.</text>
</comment>
<comment type="similarity">
    <text evidence="4">Belongs to the NrsF anti-sigma-F factor family.</text>
</comment>
<evidence type="ECO:0000255" key="1"/>
<evidence type="ECO:0000269" key="2">
    <source>
    </source>
</evidence>
<evidence type="ECO:0000303" key="3">
    <source>
    </source>
</evidence>
<evidence type="ECO:0000305" key="4"/>
<evidence type="ECO:0000305" key="5">
    <source>
    </source>
</evidence>
<proteinExistence type="evidence at protein level"/>
<protein>
    <recommendedName>
        <fullName>Anti-sigma-F factor NrsF</fullName>
    </recommendedName>
    <alternativeName>
        <fullName evidence="3">Negative regulator of sigma F</fullName>
    </alternativeName>
    <alternativeName>
        <fullName>Regulator of SigF</fullName>
    </alternativeName>
    <alternativeName>
        <fullName>Sigma-F anti-sigma factor NrsF</fullName>
    </alternativeName>
</protein>
<dbReference type="EMBL" id="CP001340">
    <property type="protein sequence ID" value="ACL96826.1"/>
    <property type="molecule type" value="Genomic_DNA"/>
</dbReference>
<dbReference type="RefSeq" id="WP_010921085.1">
    <property type="nucleotide sequence ID" value="NC_011916.1"/>
</dbReference>
<dbReference type="RefSeq" id="YP_002518734.1">
    <property type="nucleotide sequence ID" value="NC_011916.1"/>
</dbReference>
<dbReference type="GeneID" id="7332035"/>
<dbReference type="KEGG" id="ccs:CCNA_03273"/>
<dbReference type="PATRIC" id="fig|565050.3.peg.3275"/>
<dbReference type="HOGENOM" id="CLU_097826_1_0_5"/>
<dbReference type="OrthoDB" id="7764375at2"/>
<dbReference type="PhylomeDB" id="A0A0H3CC47"/>
<dbReference type="Proteomes" id="UP000001364">
    <property type="component" value="Chromosome"/>
</dbReference>
<dbReference type="GO" id="GO:0005886">
    <property type="term" value="C:plasma membrane"/>
    <property type="evidence" value="ECO:0007669"/>
    <property type="project" value="UniProtKB-SubCell"/>
</dbReference>
<dbReference type="InterPro" id="IPR053688">
    <property type="entry name" value="Anti-sigma-F_NrsF-like"/>
</dbReference>
<dbReference type="InterPro" id="IPR009495">
    <property type="entry name" value="NrsF"/>
</dbReference>
<dbReference type="NCBIfam" id="NF042994">
    <property type="entry name" value="AntiSigF_NrsF"/>
    <property type="match status" value="1"/>
</dbReference>
<dbReference type="Pfam" id="PF06532">
    <property type="entry name" value="NrsF"/>
    <property type="match status" value="1"/>
</dbReference>
<organism>
    <name type="scientific">Caulobacter vibrioides (strain NA1000 / CB15N)</name>
    <name type="common">Caulobacter crescentus</name>
    <dbReference type="NCBI Taxonomy" id="565050"/>
    <lineage>
        <taxon>Bacteria</taxon>
        <taxon>Pseudomonadati</taxon>
        <taxon>Pseudomonadota</taxon>
        <taxon>Alphaproteobacteria</taxon>
        <taxon>Caulobacterales</taxon>
        <taxon>Caulobacteraceae</taxon>
        <taxon>Caulobacter</taxon>
    </lineage>
</organism>
<reference key="1">
    <citation type="journal article" date="2010" name="J. Bacteriol.">
        <title>The genetic basis of laboratory adaptation in Caulobacter crescentus.</title>
        <authorList>
            <person name="Marks M.E."/>
            <person name="Castro-Rojas C.M."/>
            <person name="Teiling C."/>
            <person name="Du L."/>
            <person name="Kapatral V."/>
            <person name="Walunas T.L."/>
            <person name="Crosson S."/>
        </authorList>
    </citation>
    <scope>NUCLEOTIDE SEQUENCE [LARGE SCALE GENOMIC DNA]</scope>
    <source>
        <strain>NA1000 / CB15N</strain>
    </source>
</reference>
<reference key="2">
    <citation type="journal article" date="2012" name="BMC Microbiol.">
        <title>Extracytoplasmic function (ECF) sigma factor sigmaF is involved in Caulobacter crescentus response to heavy metal stress.</title>
        <authorList>
            <person name="Kohler C."/>
            <person name="Lourenco R.F."/>
            <person name="Avelar G.M."/>
            <person name="Gomes S.L."/>
        </authorList>
    </citation>
    <scope>FUNCTION</scope>
    <scope>SUBCELLULAR LOCATION</scope>
    <scope>INDUCTION</scope>
    <scope>DISRUPTION PHENOTYPE</scope>
    <scope>MUTAGENESIS OF CYS-131 AND CYS-181</scope>
    <source>
        <strain>NA1000 / CB15N</strain>
    </source>
</reference>
<feature type="chain" id="PRO_0000440884" description="Anti-sigma-F factor NrsF">
    <location>
        <begin position="1"/>
        <end position="214"/>
    </location>
</feature>
<feature type="topological domain" description="Cytoplasmic" evidence="4">
    <location>
        <begin position="1"/>
        <end position="25"/>
    </location>
</feature>
<feature type="transmembrane region" description="Helical; Name=1" evidence="1">
    <location>
        <begin position="26"/>
        <end position="46"/>
    </location>
</feature>
<feature type="topological domain" description="Periplasmic" evidence="4">
    <location>
        <begin position="47"/>
        <end position="53"/>
    </location>
</feature>
<feature type="transmembrane region" description="Helical; Name=2" evidence="1">
    <location>
        <begin position="54"/>
        <end position="74"/>
    </location>
</feature>
<feature type="topological domain" description="Cytoplasmic" evidence="4">
    <location>
        <begin position="75"/>
        <end position="90"/>
    </location>
</feature>
<feature type="transmembrane region" description="Helical; Name=3" evidence="1">
    <location>
        <begin position="91"/>
        <end position="111"/>
    </location>
</feature>
<feature type="topological domain" description="Periplasmic" evidence="5">
    <location>
        <begin position="112"/>
        <end position="134"/>
    </location>
</feature>
<feature type="transmembrane region" description="Helical; Name=4" evidence="1">
    <location>
        <begin position="135"/>
        <end position="155"/>
    </location>
</feature>
<feature type="topological domain" description="Cytoplasmic" evidence="4">
    <location>
        <begin position="156"/>
        <end position="158"/>
    </location>
</feature>
<feature type="transmembrane region" description="Helical; Name=5" evidence="1">
    <location>
        <begin position="159"/>
        <end position="179"/>
    </location>
</feature>
<feature type="topological domain" description="Periplasmic" evidence="5">
    <location>
        <begin position="180"/>
        <end position="185"/>
    </location>
</feature>
<feature type="transmembrane region" description="Helical; Name=6" evidence="1">
    <location>
        <begin position="186"/>
        <end position="206"/>
    </location>
</feature>
<feature type="topological domain" description="Cytoplasmic" evidence="4">
    <location>
        <begin position="207"/>
        <end position="214"/>
    </location>
</feature>
<feature type="mutagenesis site" description="Up-regulation of all sigF-regulon genes, even in the absence of dichromate stress, increased expression after stress. Greater up-regulation in the absence of stress, some SigF protein mis-localized to the cytoplasm; when associated with S-181." evidence="2">
    <original>C</original>
    <variation>S</variation>
    <location>
        <position position="131"/>
    </location>
</feature>
<feature type="mutagenesis site" description="Up-regulation of all sigF-regulon genes, even in the absence of dichromate stress, increased expression after stress. Greater up-regulation in the absence of stress, some SigF protein mis-localized to the cytoplasm; when associated with S-131." evidence="2">
    <original>C</original>
    <variation>S</variation>
    <location>
        <position position="181"/>
    </location>
</feature>
<name>NRSF_CAUVN</name>
<sequence length="214" mass="22529">MRTDDLIDALAADAGRGTEPAPPRRLALVAGLGGVAALLLVLGWLQARPDLGQAILGPMFWVKAIYTGLLGLAGYLAVERLSRPGGSGRRGWIIGAVVFGACAVAGIYQAITSPDVQAALKLLHGYSWRSCSPRILVLGLPMLALGLWALRGMAPTRPGLAGFAMGLFSGGVVATLYGLHCPEHTFTFLALWYSLGVLALGLIGGWAGRWLLRW</sequence>
<keyword id="KW-0997">Cell inner membrane</keyword>
<keyword id="KW-1003">Cell membrane</keyword>
<keyword id="KW-0472">Membrane</keyword>
<keyword id="KW-1185">Reference proteome</keyword>
<keyword id="KW-0346">Stress response</keyword>
<keyword id="KW-0804">Transcription</keyword>
<keyword id="KW-0805">Transcription regulation</keyword>
<keyword id="KW-0812">Transmembrane</keyword>
<keyword id="KW-1133">Transmembrane helix</keyword>